<comment type="function">
    <text evidence="1">This protein is involved in the repair of mismatches in DNA. It is possible that it carries out the mismatch recognition step. This protein has a weak ATPase activity.</text>
</comment>
<comment type="similarity">
    <text evidence="1">Belongs to the DNA mismatch repair MutS family.</text>
</comment>
<sequence length="914" mass="102163">MDNKTDNKNNLTPQSAPSSAPHKERLTPMMEQYIEIKAVNSDCLLFYRMGDFYELFFNDAIEAAQVLGITLTTRGKHLGEDIPMCGVPVHTADDYLQKLISCGYRVAVCEQTEDPAEAKKRGSKSIVRRDVVRLVTPGTLTEEKLLDPTRANYLMTLARIKTSDGEEFALSWIDISTGIFRVTESRLEKLLADIMRVDPQEIIVADSFFHDKSHKSLFNVLDCIVSPQHASLFDVITAERDICSYFKLSTLEGIADYSRPELSAIAAAIRYIEKTQITHRPPLMRPERQNESATLFIDAATRLSLELVRTTSGQRDGSLLKAIDRTVTGGGSRLLLDRLIAPLTTPSAIDKRLDSIAFFLRNTSLAEDIKLILKGGPDMPRAVSRLALGRGGPRDMASIQRGFEIIRELHQLLSNELLPQEISDVQQIFSHLPTALHLRLEQALADDLPLLKRDGGFIRPHYHKELDEMRTLRDESRRVIAELQAQYAQETDIKTLKIKHNNILGYFIEVTNLQATALTNTPQAKARFIHRQTMANAMRFTTTELAELESRIAHAANHALTLELEIFDTLVHEITEQVDFIRKAAESLAVLDVSVALAHLAEEQGYCRPKIDQSLTFCITAGRHPVVEQALRKQAAEPFVANNCDLSLQENHQYAAIWLLTGPNMGGKSTFLRQNALIAIMAQMGSFVPATSAHIGVVDRLFSRVGASDDLARGRSTFMMEMVETATILNHATQHSLVILDEIGRGTSTFDGLSIAWATVEYLHEVNHCRAILATHFHEMTALTEKLDRLHNVTMKVKNWDGDVIFLHEVTPGAADRSYGVQVAKLAGLPKAVITRATDVLQQLEQGEMAGKGHKLIDDLPLFSLKTTSSLNEDTNKYSMLHEAFKNIHPDELSPKQALEALYHLKQLEKNNPL</sequence>
<protein>
    <recommendedName>
        <fullName evidence="1">DNA mismatch repair protein MutS</fullName>
    </recommendedName>
</protein>
<dbReference type="EMBL" id="BX897699">
    <property type="protein sequence ID" value="CAF26915.1"/>
    <property type="molecule type" value="Genomic_DNA"/>
</dbReference>
<dbReference type="RefSeq" id="WP_011180059.1">
    <property type="nucleotide sequence ID" value="NC_005956.1"/>
</dbReference>
<dbReference type="SMR" id="Q6G542"/>
<dbReference type="PaxDb" id="283166-BH01000"/>
<dbReference type="EnsemblBacteria" id="CAF26915">
    <property type="protein sequence ID" value="CAF26915"/>
    <property type="gene ID" value="BH01000"/>
</dbReference>
<dbReference type="GeneID" id="92986385"/>
<dbReference type="KEGG" id="bhe:BH01000"/>
<dbReference type="eggNOG" id="COG0249">
    <property type="taxonomic scope" value="Bacteria"/>
</dbReference>
<dbReference type="OrthoDB" id="9802448at2"/>
<dbReference type="Proteomes" id="UP000000421">
    <property type="component" value="Chromosome"/>
</dbReference>
<dbReference type="GO" id="GO:0005829">
    <property type="term" value="C:cytosol"/>
    <property type="evidence" value="ECO:0007669"/>
    <property type="project" value="TreeGrafter"/>
</dbReference>
<dbReference type="GO" id="GO:0005524">
    <property type="term" value="F:ATP binding"/>
    <property type="evidence" value="ECO:0007669"/>
    <property type="project" value="UniProtKB-UniRule"/>
</dbReference>
<dbReference type="GO" id="GO:0140664">
    <property type="term" value="F:ATP-dependent DNA damage sensor activity"/>
    <property type="evidence" value="ECO:0007669"/>
    <property type="project" value="InterPro"/>
</dbReference>
<dbReference type="GO" id="GO:0003684">
    <property type="term" value="F:damaged DNA binding"/>
    <property type="evidence" value="ECO:0007669"/>
    <property type="project" value="UniProtKB-UniRule"/>
</dbReference>
<dbReference type="GO" id="GO:0030983">
    <property type="term" value="F:mismatched DNA binding"/>
    <property type="evidence" value="ECO:0007669"/>
    <property type="project" value="InterPro"/>
</dbReference>
<dbReference type="GO" id="GO:0006298">
    <property type="term" value="P:mismatch repair"/>
    <property type="evidence" value="ECO:0007669"/>
    <property type="project" value="UniProtKB-UniRule"/>
</dbReference>
<dbReference type="CDD" id="cd03284">
    <property type="entry name" value="ABC_MutS1"/>
    <property type="match status" value="1"/>
</dbReference>
<dbReference type="FunFam" id="3.40.1170.10:FF:000001">
    <property type="entry name" value="DNA mismatch repair protein MutS"/>
    <property type="match status" value="1"/>
</dbReference>
<dbReference type="FunFam" id="3.40.50.300:FF:000870">
    <property type="entry name" value="MutS protein homolog 4"/>
    <property type="match status" value="1"/>
</dbReference>
<dbReference type="Gene3D" id="1.10.1420.10">
    <property type="match status" value="2"/>
</dbReference>
<dbReference type="Gene3D" id="6.10.140.430">
    <property type="match status" value="1"/>
</dbReference>
<dbReference type="Gene3D" id="3.40.1170.10">
    <property type="entry name" value="DNA repair protein MutS, domain I"/>
    <property type="match status" value="1"/>
</dbReference>
<dbReference type="Gene3D" id="3.30.420.110">
    <property type="entry name" value="MutS, connector domain"/>
    <property type="match status" value="1"/>
</dbReference>
<dbReference type="Gene3D" id="3.40.50.300">
    <property type="entry name" value="P-loop containing nucleotide triphosphate hydrolases"/>
    <property type="match status" value="1"/>
</dbReference>
<dbReference type="HAMAP" id="MF_00096">
    <property type="entry name" value="MutS"/>
    <property type="match status" value="1"/>
</dbReference>
<dbReference type="InterPro" id="IPR005748">
    <property type="entry name" value="DNA_mismatch_repair_MutS"/>
</dbReference>
<dbReference type="InterPro" id="IPR007695">
    <property type="entry name" value="DNA_mismatch_repair_MutS-lik_N"/>
</dbReference>
<dbReference type="InterPro" id="IPR017261">
    <property type="entry name" value="DNA_mismatch_repair_MutS/MSH"/>
</dbReference>
<dbReference type="InterPro" id="IPR000432">
    <property type="entry name" value="DNA_mismatch_repair_MutS_C"/>
</dbReference>
<dbReference type="InterPro" id="IPR007861">
    <property type="entry name" value="DNA_mismatch_repair_MutS_clamp"/>
</dbReference>
<dbReference type="InterPro" id="IPR007696">
    <property type="entry name" value="DNA_mismatch_repair_MutS_core"/>
</dbReference>
<dbReference type="InterPro" id="IPR016151">
    <property type="entry name" value="DNA_mismatch_repair_MutS_N"/>
</dbReference>
<dbReference type="InterPro" id="IPR036187">
    <property type="entry name" value="DNA_mismatch_repair_MutS_sf"/>
</dbReference>
<dbReference type="InterPro" id="IPR007860">
    <property type="entry name" value="DNA_mmatch_repair_MutS_con_dom"/>
</dbReference>
<dbReference type="InterPro" id="IPR045076">
    <property type="entry name" value="MutS"/>
</dbReference>
<dbReference type="InterPro" id="IPR036678">
    <property type="entry name" value="MutS_con_dom_sf"/>
</dbReference>
<dbReference type="InterPro" id="IPR027417">
    <property type="entry name" value="P-loop_NTPase"/>
</dbReference>
<dbReference type="NCBIfam" id="TIGR01070">
    <property type="entry name" value="mutS1"/>
    <property type="match status" value="1"/>
</dbReference>
<dbReference type="NCBIfam" id="NF003810">
    <property type="entry name" value="PRK05399.1"/>
    <property type="match status" value="1"/>
</dbReference>
<dbReference type="PANTHER" id="PTHR11361:SF34">
    <property type="entry name" value="DNA MISMATCH REPAIR PROTEIN MSH1, MITOCHONDRIAL"/>
    <property type="match status" value="1"/>
</dbReference>
<dbReference type="PANTHER" id="PTHR11361">
    <property type="entry name" value="DNA MISMATCH REPAIR PROTEIN MUTS FAMILY MEMBER"/>
    <property type="match status" value="1"/>
</dbReference>
<dbReference type="Pfam" id="PF01624">
    <property type="entry name" value="MutS_I"/>
    <property type="match status" value="1"/>
</dbReference>
<dbReference type="Pfam" id="PF05188">
    <property type="entry name" value="MutS_II"/>
    <property type="match status" value="1"/>
</dbReference>
<dbReference type="Pfam" id="PF05192">
    <property type="entry name" value="MutS_III"/>
    <property type="match status" value="1"/>
</dbReference>
<dbReference type="Pfam" id="PF05190">
    <property type="entry name" value="MutS_IV"/>
    <property type="match status" value="1"/>
</dbReference>
<dbReference type="Pfam" id="PF00488">
    <property type="entry name" value="MutS_V"/>
    <property type="match status" value="1"/>
</dbReference>
<dbReference type="PIRSF" id="PIRSF037677">
    <property type="entry name" value="DNA_mis_repair_Msh6"/>
    <property type="match status" value="1"/>
</dbReference>
<dbReference type="SMART" id="SM00534">
    <property type="entry name" value="MUTSac"/>
    <property type="match status" value="1"/>
</dbReference>
<dbReference type="SMART" id="SM00533">
    <property type="entry name" value="MUTSd"/>
    <property type="match status" value="1"/>
</dbReference>
<dbReference type="SUPFAM" id="SSF55271">
    <property type="entry name" value="DNA repair protein MutS, domain I"/>
    <property type="match status" value="1"/>
</dbReference>
<dbReference type="SUPFAM" id="SSF53150">
    <property type="entry name" value="DNA repair protein MutS, domain II"/>
    <property type="match status" value="1"/>
</dbReference>
<dbReference type="SUPFAM" id="SSF48334">
    <property type="entry name" value="DNA repair protein MutS, domain III"/>
    <property type="match status" value="1"/>
</dbReference>
<dbReference type="SUPFAM" id="SSF52540">
    <property type="entry name" value="P-loop containing nucleoside triphosphate hydrolases"/>
    <property type="match status" value="1"/>
</dbReference>
<dbReference type="PROSITE" id="PS00486">
    <property type="entry name" value="DNA_MISMATCH_REPAIR_2"/>
    <property type="match status" value="1"/>
</dbReference>
<name>MUTS_BARHE</name>
<organism>
    <name type="scientific">Bartonella henselae (strain ATCC 49882 / DSM 28221 / CCUG 30454 / Houston 1)</name>
    <name type="common">Rochalimaea henselae</name>
    <dbReference type="NCBI Taxonomy" id="283166"/>
    <lineage>
        <taxon>Bacteria</taxon>
        <taxon>Pseudomonadati</taxon>
        <taxon>Pseudomonadota</taxon>
        <taxon>Alphaproteobacteria</taxon>
        <taxon>Hyphomicrobiales</taxon>
        <taxon>Bartonellaceae</taxon>
        <taxon>Bartonella</taxon>
    </lineage>
</organism>
<reference key="1">
    <citation type="journal article" date="2004" name="Proc. Natl. Acad. Sci. U.S.A.">
        <title>The louse-borne human pathogen Bartonella quintana is a genomic derivative of the zoonotic agent Bartonella henselae.</title>
        <authorList>
            <person name="Alsmark U.C.M."/>
            <person name="Frank A.C."/>
            <person name="Karlberg E.O."/>
            <person name="Legault B.-A."/>
            <person name="Ardell D.H."/>
            <person name="Canbaeck B."/>
            <person name="Eriksson A.-S."/>
            <person name="Naeslund A.K."/>
            <person name="Handley S.A."/>
            <person name="Huvet M."/>
            <person name="La Scola B."/>
            <person name="Holmberg M."/>
            <person name="Andersson S.G.E."/>
        </authorList>
    </citation>
    <scope>NUCLEOTIDE SEQUENCE [LARGE SCALE GENOMIC DNA]</scope>
    <source>
        <strain>ATCC 49882 / DSM 28221 / CCUG 30454 / Houston 1</strain>
    </source>
</reference>
<feature type="chain" id="PRO_0000224351" description="DNA mismatch repair protein MutS">
    <location>
        <begin position="1"/>
        <end position="914"/>
    </location>
</feature>
<feature type="region of interest" description="Disordered" evidence="2">
    <location>
        <begin position="1"/>
        <end position="24"/>
    </location>
</feature>
<feature type="compositionally biased region" description="Polar residues" evidence="2">
    <location>
        <begin position="8"/>
        <end position="18"/>
    </location>
</feature>
<feature type="binding site" evidence="1">
    <location>
        <begin position="662"/>
        <end position="669"/>
    </location>
    <ligand>
        <name>ATP</name>
        <dbReference type="ChEBI" id="CHEBI:30616"/>
    </ligand>
</feature>
<accession>Q6G542</accession>
<gene>
    <name evidence="1" type="primary">mutS</name>
    <name type="ordered locus">BH01000</name>
</gene>
<proteinExistence type="inferred from homology"/>
<evidence type="ECO:0000255" key="1">
    <source>
        <dbReference type="HAMAP-Rule" id="MF_00096"/>
    </source>
</evidence>
<evidence type="ECO:0000256" key="2">
    <source>
        <dbReference type="SAM" id="MobiDB-lite"/>
    </source>
</evidence>
<keyword id="KW-0067">ATP-binding</keyword>
<keyword id="KW-0227">DNA damage</keyword>
<keyword id="KW-0234">DNA repair</keyword>
<keyword id="KW-0238">DNA-binding</keyword>
<keyword id="KW-0547">Nucleotide-binding</keyword>